<dbReference type="EC" id="1.-.-.-" evidence="8"/>
<dbReference type="EMBL" id="BN001305">
    <property type="protein sequence ID" value="CBF80483.1"/>
    <property type="molecule type" value="Genomic_DNA"/>
</dbReference>
<dbReference type="EMBL" id="AACD01000153">
    <property type="protein sequence ID" value="EAA67032.1"/>
    <property type="molecule type" value="Genomic_DNA"/>
</dbReference>
<dbReference type="RefSeq" id="XP_681679.1">
    <property type="nucleotide sequence ID" value="XM_676587.1"/>
</dbReference>
<dbReference type="SMR" id="Q5ATH0"/>
<dbReference type="STRING" id="227321.Q5ATH0"/>
<dbReference type="EnsemblFungi" id="CBF80483">
    <property type="protein sequence ID" value="CBF80483"/>
    <property type="gene ID" value="ANIA_08410"/>
</dbReference>
<dbReference type="KEGG" id="ani:ANIA_08410"/>
<dbReference type="eggNOG" id="KOG3855">
    <property type="taxonomic scope" value="Eukaryota"/>
</dbReference>
<dbReference type="HOGENOM" id="CLU_009665_14_2_1"/>
<dbReference type="InParanoid" id="Q5ATH0"/>
<dbReference type="OMA" id="SMPSEPW"/>
<dbReference type="OrthoDB" id="2096480at2759"/>
<dbReference type="Proteomes" id="UP000000560">
    <property type="component" value="Chromosome V"/>
</dbReference>
<dbReference type="GO" id="GO:0071949">
    <property type="term" value="F:FAD binding"/>
    <property type="evidence" value="ECO:0007669"/>
    <property type="project" value="InterPro"/>
</dbReference>
<dbReference type="GO" id="GO:0016491">
    <property type="term" value="F:oxidoreductase activity"/>
    <property type="evidence" value="ECO:0000318"/>
    <property type="project" value="GO_Central"/>
</dbReference>
<dbReference type="GO" id="GO:0016709">
    <property type="term" value="F:oxidoreductase activity, acting on paired donors, with incorporation or reduction of molecular oxygen, NAD(P)H as one donor, and incorporation of one atom of oxygen"/>
    <property type="evidence" value="ECO:0007669"/>
    <property type="project" value="UniProtKB-ARBA"/>
</dbReference>
<dbReference type="GO" id="GO:0009058">
    <property type="term" value="P:biosynthetic process"/>
    <property type="evidence" value="ECO:0007669"/>
    <property type="project" value="UniProtKB-ARBA"/>
</dbReference>
<dbReference type="Gene3D" id="3.40.30.120">
    <property type="match status" value="1"/>
</dbReference>
<dbReference type="Gene3D" id="3.30.9.10">
    <property type="entry name" value="D-Amino Acid Oxidase, subunit A, domain 2"/>
    <property type="match status" value="1"/>
</dbReference>
<dbReference type="Gene3D" id="3.50.50.60">
    <property type="entry name" value="FAD/NAD(P)-binding domain"/>
    <property type="match status" value="1"/>
</dbReference>
<dbReference type="InterPro" id="IPR002938">
    <property type="entry name" value="FAD-bd"/>
</dbReference>
<dbReference type="InterPro" id="IPR036188">
    <property type="entry name" value="FAD/NAD-bd_sf"/>
</dbReference>
<dbReference type="InterPro" id="IPR050641">
    <property type="entry name" value="RIFMO-like"/>
</dbReference>
<dbReference type="PANTHER" id="PTHR43004:SF21">
    <property type="entry name" value="FAD-BINDING DOMAIN-CONTAINING PROTEIN-RELATED"/>
    <property type="match status" value="1"/>
</dbReference>
<dbReference type="PANTHER" id="PTHR43004">
    <property type="entry name" value="TRK SYSTEM POTASSIUM UPTAKE PROTEIN"/>
    <property type="match status" value="1"/>
</dbReference>
<dbReference type="Pfam" id="PF01494">
    <property type="entry name" value="FAD_binding_3"/>
    <property type="match status" value="1"/>
</dbReference>
<dbReference type="Pfam" id="PF21274">
    <property type="entry name" value="Rng_hyd_C"/>
    <property type="match status" value="1"/>
</dbReference>
<dbReference type="PRINTS" id="PR00420">
    <property type="entry name" value="RNGMNOXGNASE"/>
</dbReference>
<dbReference type="SUPFAM" id="SSF51905">
    <property type="entry name" value="FAD/NAD(P)-binding domain"/>
    <property type="match status" value="1"/>
</dbReference>
<keyword id="KW-0274">FAD</keyword>
<keyword id="KW-0285">Flavoprotein</keyword>
<keyword id="KW-0503">Monooxygenase</keyword>
<keyword id="KW-0560">Oxidoreductase</keyword>
<keyword id="KW-1185">Reference proteome</keyword>
<sequence>MWSILSIKRSTSRMELMCLNAAECPINVFPEQQRNMPTESLNPGTVLIVGGGPVGLITATTLAKYGVRSVILERNLTTTKWPKMDLTNSRSMEIYQRLGIADALRNVAVPSHYPFTCLFSSGLHADKAITAWDLPSPDEYRRRIREQNDGSMPSEPWLRVSQEIFEAWLKELGMENPLIDFRAGWKVKGARELDHGVEVEAIHSDTGEVWKVSADFVIGCDGAHSAIRKSLEIPLDGGPIHGYAVLVHFKSRDLSRIQKQGQFWHLFFPNAASDGGSIKGAVIAQDEVDTWTVHRFMRPDVDHTQLSSEEIVYDLLGGMGGQPFPIRIDEVLVRSTWTPSVALARSYAGPKHRIFIAGDACHQTVPTGGYGMNTGIADGYDIGWKLAAVIQGWAGPATLLSYEKERRPVGELALQWSKVHMGNLMKMSAELGLDAHMIELNNETGAELRGAMHSYLQTHDGHNQSIGVEMGYRYVSNICVPGALDAELSPPEFHPRKYTPCTMPGYRAPHVYLTTGTPVSRLFGDGFTLVAFPEGEGLNASTEQLREAARKKALPLEVVELPGEMHAHEVWGASLVLVRPDGFVSWHGDSVRSQEEADRIIAQASGFDSEHLGNHVQAQERSAL</sequence>
<protein>
    <recommendedName>
        <fullName evidence="6">FAD-dependent monooxygenase apdD</fullName>
        <ecNumber evidence="8">1.-.-.-</ecNumber>
    </recommendedName>
    <alternativeName>
        <fullName evidence="6">Aspyridones biosynthesis protein D</fullName>
    </alternativeName>
</protein>
<proteinExistence type="evidence at transcript level"/>
<feature type="chain" id="PRO_0000438454" description="FAD-dependent monooxygenase apdD">
    <location>
        <begin position="1"/>
        <end position="624"/>
    </location>
</feature>
<feature type="binding site" evidence="1">
    <location>
        <position position="73"/>
    </location>
    <ligand>
        <name>FAD</name>
        <dbReference type="ChEBI" id="CHEBI:57692"/>
    </ligand>
</feature>
<feature type="binding site" evidence="1">
    <location>
        <position position="359"/>
    </location>
    <ligand>
        <name>FAD</name>
        <dbReference type="ChEBI" id="CHEBI:57692"/>
    </ligand>
</feature>
<evidence type="ECO:0000250" key="1">
    <source>
        <dbReference type="UniProtKB" id="B8M9J8"/>
    </source>
</evidence>
<evidence type="ECO:0000269" key="2">
    <source>
    </source>
</evidence>
<evidence type="ECO:0000269" key="3">
    <source>
    </source>
</evidence>
<evidence type="ECO:0000269" key="4">
    <source>
    </source>
</evidence>
<evidence type="ECO:0000269" key="5">
    <source ref="5"/>
</evidence>
<evidence type="ECO:0000303" key="6">
    <source>
    </source>
</evidence>
<evidence type="ECO:0000305" key="7"/>
<evidence type="ECO:0000305" key="8">
    <source>
    </source>
</evidence>
<evidence type="ECO:0000305" key="9">
    <source ref="5"/>
</evidence>
<comment type="function">
    <text evidence="2 3 4 5 9">FAD-dependent monooxygenase; part of the gene cluster that mediates the biosynthesis of aspyridones (PubMed:17369821, Ref.5). The polyketide-amino acid backbone preaspyridone A is first assembled by the PKS-NRPS hybrid apdA (PubMed:17369821, PubMed:20828130). The assembly of preaspyridone A is initiated by loading of malonyl-CoA onto apdA, followed by decarboxylation to yield the acetyl starter unit (PubMed:20828130). The growing polyketide chain then elongates into a tetraketide (PubMed:20828130). The adpA PKS module catalyzes three Claisen condensations, as well as beta-keto processing and methylation (PubMed:17369821, PubMed:20828130). Alpha-methylation step during polyketide synthesis is a prerequisite and a key checkpoint for chain transfer between PKS and NRPS modules (PubMed:25494235). The downstream NRPS module contains the condensation (C), adenylation (A), and thiolation (T) domains and catalyzes the incorporation of tyrosine via the formation of the L-tyrosinyl-thioester and the amide linkage between L-tyrosinyl-thioester and the tetraketide (PubMed:20828130). The bimodular assembly line is terminated with a reductase (R) domain that facilitates formation and release of the tetramic acid product (PubMed:20828130). Because apdA lacks a designated enoylreductase (ER) domain, the required activity is provided the enoyl reductase apdC (PubMed:17369821, PubMed:20828130, Ref.5). ApdC appears to operate with different stereoselectivity in different PKS cycle (Ref.5). Combined with apdC, apdA is proposed to synthesize preaspyridone A via about 20 enzymatic steps (PubMed:20828130). A number of oxidative steps performed successively by the cytochrome P450 monooxygenases apdE and apdB are required for the conversion of preaspyridone A to aspyridone A (PubMed:17369821). The cytochrome P450 monooxygenase apdE is responsible for the oxidative dephenylation of preaspyridone A (Ref.5). Finally, the predicted FAD-dependent monooxygenase apdD and the acyl-CoA dehydrogenase apdG may be involved in the transformation of aspyridone A into aspyridone B (Probable) (PubMed:17369821).</text>
</comment>
<comment type="cofactor">
    <cofactor evidence="7">
        <name>FAD</name>
        <dbReference type="ChEBI" id="CHEBI:57692"/>
    </cofactor>
</comment>
<comment type="pathway">
    <text evidence="2">Secondary metabolite biosynthesis.</text>
</comment>
<comment type="induction">
    <text evidence="2">Expression is positively regulated by the aspyridones cluster specific transcription regulator apdR (PubMed:17369821).</text>
</comment>
<comment type="similarity">
    <text evidence="7">Belongs to the paxM FAD-dependent monooxygenase family.</text>
</comment>
<gene>
    <name evidence="6" type="primary">apdD</name>
    <name type="ORF">AN8410</name>
</gene>
<accession>Q5ATH0</accession>
<accession>C8VEB1</accession>
<reference key="1">
    <citation type="journal article" date="2005" name="Nature">
        <title>Sequencing of Aspergillus nidulans and comparative analysis with A. fumigatus and A. oryzae.</title>
        <authorList>
            <person name="Galagan J.E."/>
            <person name="Calvo S.E."/>
            <person name="Cuomo C."/>
            <person name="Ma L.-J."/>
            <person name="Wortman J.R."/>
            <person name="Batzoglou S."/>
            <person name="Lee S.-I."/>
            <person name="Bastuerkmen M."/>
            <person name="Spevak C.C."/>
            <person name="Clutterbuck J."/>
            <person name="Kapitonov V."/>
            <person name="Jurka J."/>
            <person name="Scazzocchio C."/>
            <person name="Farman M.L."/>
            <person name="Butler J."/>
            <person name="Purcell S."/>
            <person name="Harris S."/>
            <person name="Braus G.H."/>
            <person name="Draht O."/>
            <person name="Busch S."/>
            <person name="D'Enfert C."/>
            <person name="Bouchier C."/>
            <person name="Goldman G.H."/>
            <person name="Bell-Pedersen D."/>
            <person name="Griffiths-Jones S."/>
            <person name="Doonan J.H."/>
            <person name="Yu J."/>
            <person name="Vienken K."/>
            <person name="Pain A."/>
            <person name="Freitag M."/>
            <person name="Selker E.U."/>
            <person name="Archer D.B."/>
            <person name="Penalva M.A."/>
            <person name="Oakley B.R."/>
            <person name="Momany M."/>
            <person name="Tanaka T."/>
            <person name="Kumagai T."/>
            <person name="Asai K."/>
            <person name="Machida M."/>
            <person name="Nierman W.C."/>
            <person name="Denning D.W."/>
            <person name="Caddick M.X."/>
            <person name="Hynes M."/>
            <person name="Paoletti M."/>
            <person name="Fischer R."/>
            <person name="Miller B.L."/>
            <person name="Dyer P.S."/>
            <person name="Sachs M.S."/>
            <person name="Osmani S.A."/>
            <person name="Birren B.W."/>
        </authorList>
    </citation>
    <scope>NUCLEOTIDE SEQUENCE [LARGE SCALE GENOMIC DNA]</scope>
    <source>
        <strain>FGSC A4 / ATCC 38163 / CBS 112.46 / NRRL 194 / M139</strain>
    </source>
</reference>
<reference key="2">
    <citation type="journal article" date="2009" name="Fungal Genet. Biol.">
        <title>The 2008 update of the Aspergillus nidulans genome annotation: a community effort.</title>
        <authorList>
            <person name="Wortman J.R."/>
            <person name="Gilsenan J.M."/>
            <person name="Joardar V."/>
            <person name="Deegan J."/>
            <person name="Clutterbuck J."/>
            <person name="Andersen M.R."/>
            <person name="Archer D."/>
            <person name="Bencina M."/>
            <person name="Braus G."/>
            <person name="Coutinho P."/>
            <person name="von Dohren H."/>
            <person name="Doonan J."/>
            <person name="Driessen A.J."/>
            <person name="Durek P."/>
            <person name="Espeso E."/>
            <person name="Fekete E."/>
            <person name="Flipphi M."/>
            <person name="Estrada C.G."/>
            <person name="Geysens S."/>
            <person name="Goldman G."/>
            <person name="de Groot P.W."/>
            <person name="Hansen K."/>
            <person name="Harris S.D."/>
            <person name="Heinekamp T."/>
            <person name="Helmstaedt K."/>
            <person name="Henrissat B."/>
            <person name="Hofmann G."/>
            <person name="Homan T."/>
            <person name="Horio T."/>
            <person name="Horiuchi H."/>
            <person name="James S."/>
            <person name="Jones M."/>
            <person name="Karaffa L."/>
            <person name="Karanyi Z."/>
            <person name="Kato M."/>
            <person name="Keller N."/>
            <person name="Kelly D.E."/>
            <person name="Kiel J.A."/>
            <person name="Kim J.M."/>
            <person name="van der Klei I.J."/>
            <person name="Klis F.M."/>
            <person name="Kovalchuk A."/>
            <person name="Krasevec N."/>
            <person name="Kubicek C.P."/>
            <person name="Liu B."/>
            <person name="Maccabe A."/>
            <person name="Meyer V."/>
            <person name="Mirabito P."/>
            <person name="Miskei M."/>
            <person name="Mos M."/>
            <person name="Mullins J."/>
            <person name="Nelson D.R."/>
            <person name="Nielsen J."/>
            <person name="Oakley B.R."/>
            <person name="Osmani S.A."/>
            <person name="Pakula T."/>
            <person name="Paszewski A."/>
            <person name="Paulsen I."/>
            <person name="Pilsyk S."/>
            <person name="Pocsi I."/>
            <person name="Punt P.J."/>
            <person name="Ram A.F."/>
            <person name="Ren Q."/>
            <person name="Robellet X."/>
            <person name="Robson G."/>
            <person name="Seiboth B."/>
            <person name="van Solingen P."/>
            <person name="Specht T."/>
            <person name="Sun J."/>
            <person name="Taheri-Talesh N."/>
            <person name="Takeshita N."/>
            <person name="Ussery D."/>
            <person name="vanKuyk P.A."/>
            <person name="Visser H."/>
            <person name="van de Vondervoort P.J."/>
            <person name="de Vries R.P."/>
            <person name="Walton J."/>
            <person name="Xiang X."/>
            <person name="Xiong Y."/>
            <person name="Zeng A.P."/>
            <person name="Brandt B.W."/>
            <person name="Cornell M.J."/>
            <person name="van den Hondel C.A."/>
            <person name="Visser J."/>
            <person name="Oliver S.G."/>
            <person name="Turner G."/>
        </authorList>
    </citation>
    <scope>GENOME REANNOTATION</scope>
    <source>
        <strain>FGSC A4 / ATCC 38163 / CBS 112.46 / NRRL 194 / M139</strain>
    </source>
</reference>
<reference key="3">
    <citation type="journal article" date="2007" name="Nat. Chem. Biol.">
        <title>Genomics-driven discovery of PKS-NRPS hybrid metabolites from Aspergillus nidulans.</title>
        <authorList>
            <person name="Bergmann S."/>
            <person name="Schuemann J."/>
            <person name="Scherlach K."/>
            <person name="Lange C."/>
            <person name="Brakhage A.A."/>
            <person name="Hertweck C."/>
        </authorList>
    </citation>
    <scope>FUNCTION</scope>
    <scope>INDUCTION</scope>
    <scope>PATHWAY</scope>
</reference>
<reference key="4">
    <citation type="journal article" date="2010" name="J. Am. Chem. Soc.">
        <title>Analysis of intact and dissected fungal polyketide synthase-nonribosomal peptide synthetase in vitro and in Saccharomyces cerevisiae.</title>
        <authorList>
            <person name="Xu W."/>
            <person name="Cai X."/>
            <person name="Jung M.E."/>
            <person name="Tang Y."/>
        </authorList>
    </citation>
    <scope>FUNCTION</scope>
</reference>
<reference key="5">
    <citation type="journal article" date="2013" name="Chem. Sci.">
        <title>One pathway, many compounds: Heterologous expression of a fungal biosynthetic pathway reveals its intrinsic potential for diversity.</title>
        <authorList>
            <person name="Wasil Z."/>
            <person name="Pahirulzaman K.A.K."/>
            <person name="Butts C."/>
            <person name="Simpson T.J."/>
            <person name="Lazarus C.M."/>
            <person name="Cox R.J."/>
        </authorList>
    </citation>
    <scope>FUNCTION</scope>
</reference>
<reference key="6">
    <citation type="journal article" date="2014" name="Org. Lett.">
        <title>Methylation-dependent acyl transfer between polyketide synthase and nonribosomal peptide synthetase modules in fungal natural product biosynthesis.</title>
        <authorList>
            <person name="Zou Y."/>
            <person name="Xu W."/>
            <person name="Tsunematsu Y."/>
            <person name="Tang M."/>
            <person name="Watanabe K."/>
            <person name="Tang Y."/>
        </authorList>
    </citation>
    <scope>FUNCTION</scope>
</reference>
<organism>
    <name type="scientific">Emericella nidulans (strain FGSC A4 / ATCC 38163 / CBS 112.46 / NRRL 194 / M139)</name>
    <name type="common">Aspergillus nidulans</name>
    <dbReference type="NCBI Taxonomy" id="227321"/>
    <lineage>
        <taxon>Eukaryota</taxon>
        <taxon>Fungi</taxon>
        <taxon>Dikarya</taxon>
        <taxon>Ascomycota</taxon>
        <taxon>Pezizomycotina</taxon>
        <taxon>Eurotiomycetes</taxon>
        <taxon>Eurotiomycetidae</taxon>
        <taxon>Eurotiales</taxon>
        <taxon>Aspergillaceae</taxon>
        <taxon>Aspergillus</taxon>
        <taxon>Aspergillus subgen. Nidulantes</taxon>
    </lineage>
</organism>
<name>APDD_EMENI</name>